<keyword id="KW-0002">3D-structure</keyword>
<keyword id="KW-0007">Acetylation</keyword>
<keyword id="KW-0025">Alternative splicing</keyword>
<keyword id="KW-0225">Disease variant</keyword>
<keyword id="KW-0343">GTPase activation</keyword>
<keyword id="KW-0479">Metal-binding</keyword>
<keyword id="KW-0524">Neurogenesis</keyword>
<keyword id="KW-0597">Phosphoprotein</keyword>
<keyword id="KW-1267">Proteomics identification</keyword>
<keyword id="KW-1185">Reference proteome</keyword>
<keyword id="KW-0727">SH2 domain</keyword>
<keyword id="KW-0862">Zinc</keyword>
<keyword id="KW-0863">Zinc-finger</keyword>
<protein>
    <recommendedName>
        <fullName>N-chimaerin</fullName>
    </recommendedName>
    <alternativeName>
        <fullName>A-chimaerin</fullName>
    </alternativeName>
    <alternativeName>
        <fullName>Alpha-chimerin</fullName>
    </alternativeName>
    <alternativeName>
        <fullName>N-chimerin</fullName>
        <shortName>NC</shortName>
    </alternativeName>
    <alternativeName>
        <fullName>Rho GTPase-activating protein 2</fullName>
    </alternativeName>
</protein>
<reference key="1">
    <citation type="journal article" date="1990" name="J. Mol. Biol.">
        <title>Novel human brain cDNA encoding a 34,000 Mr protein n-chimaerin, related to both the regulatory domain of protein kinase C and BCR, the product of the breakpoint cluster region gene.</title>
        <authorList>
            <person name="Hall C."/>
            <person name="Monfries C."/>
            <person name="Smith P."/>
            <person name="Lim H.H."/>
            <person name="Kozma R."/>
            <person name="Ahmed S."/>
            <person name="Vanniasingham V."/>
            <person name="Leung T."/>
            <person name="Lim L."/>
        </authorList>
    </citation>
    <scope>NUCLEOTIDE SEQUENCE [MRNA] (ISOFORM ALPHA-1)</scope>
    <source>
        <tissue>Retina</tissue>
    </source>
</reference>
<reference key="2">
    <citation type="journal article" date="1992" name="Biochem. J.">
        <title>Developmental regulation and neuronal expression of the mRNA of rat n-chimaerin, a p21rac GAP:cDNA sequence.</title>
        <authorList>
            <person name="Lim H.H."/>
            <person name="Michael G.J."/>
            <person name="Smith P."/>
            <person name="Lim L."/>
            <person name="Hall C."/>
        </authorList>
    </citation>
    <scope>SEQUENCE REVISION</scope>
</reference>
<reference key="3">
    <citation type="journal article" date="1993" name="Mol. Cell. Biol.">
        <title>Alpha 2-chimerin, an SH2-containing GTPase-activating protein for the ras-related protein p21rac derived by alternate splicing of the human n-chimerin gene, is selectively expressed in brain regions and testes.</title>
        <authorList>
            <person name="Hall C."/>
            <person name="Sin W.C."/>
            <person name="Teo M."/>
            <person name="Michael G.J."/>
            <person name="Smith P."/>
            <person name="Dong J.M."/>
            <person name="Lim H.H."/>
            <person name="Manser E."/>
            <person name="Spurr N.K."/>
            <person name="Jones T.A."/>
            <person name="Lim L."/>
        </authorList>
    </citation>
    <scope>NUCLEOTIDE SEQUENCE [MRNA] (ISOFORM ALPHA-2)</scope>
</reference>
<reference key="4">
    <citation type="journal article" date="2004" name="Nat. Genet.">
        <title>Complete sequencing and characterization of 21,243 full-length human cDNAs.</title>
        <authorList>
            <person name="Ota T."/>
            <person name="Suzuki Y."/>
            <person name="Nishikawa T."/>
            <person name="Otsuki T."/>
            <person name="Sugiyama T."/>
            <person name="Irie R."/>
            <person name="Wakamatsu A."/>
            <person name="Hayashi K."/>
            <person name="Sato H."/>
            <person name="Nagai K."/>
            <person name="Kimura K."/>
            <person name="Makita H."/>
            <person name="Sekine M."/>
            <person name="Obayashi M."/>
            <person name="Nishi T."/>
            <person name="Shibahara T."/>
            <person name="Tanaka T."/>
            <person name="Ishii S."/>
            <person name="Yamamoto J."/>
            <person name="Saito K."/>
            <person name="Kawai Y."/>
            <person name="Isono Y."/>
            <person name="Nakamura Y."/>
            <person name="Nagahari K."/>
            <person name="Murakami K."/>
            <person name="Yasuda T."/>
            <person name="Iwayanagi T."/>
            <person name="Wagatsuma M."/>
            <person name="Shiratori A."/>
            <person name="Sudo H."/>
            <person name="Hosoiri T."/>
            <person name="Kaku Y."/>
            <person name="Kodaira H."/>
            <person name="Kondo H."/>
            <person name="Sugawara M."/>
            <person name="Takahashi M."/>
            <person name="Kanda K."/>
            <person name="Yokoi T."/>
            <person name="Furuya T."/>
            <person name="Kikkawa E."/>
            <person name="Omura Y."/>
            <person name="Abe K."/>
            <person name="Kamihara K."/>
            <person name="Katsuta N."/>
            <person name="Sato K."/>
            <person name="Tanikawa M."/>
            <person name="Yamazaki M."/>
            <person name="Ninomiya K."/>
            <person name="Ishibashi T."/>
            <person name="Yamashita H."/>
            <person name="Murakawa K."/>
            <person name="Fujimori K."/>
            <person name="Tanai H."/>
            <person name="Kimata M."/>
            <person name="Watanabe M."/>
            <person name="Hiraoka S."/>
            <person name="Chiba Y."/>
            <person name="Ishida S."/>
            <person name="Ono Y."/>
            <person name="Takiguchi S."/>
            <person name="Watanabe S."/>
            <person name="Yosida M."/>
            <person name="Hotuta T."/>
            <person name="Kusano J."/>
            <person name="Kanehori K."/>
            <person name="Takahashi-Fujii A."/>
            <person name="Hara H."/>
            <person name="Tanase T.-O."/>
            <person name="Nomura Y."/>
            <person name="Togiya S."/>
            <person name="Komai F."/>
            <person name="Hara R."/>
            <person name="Takeuchi K."/>
            <person name="Arita M."/>
            <person name="Imose N."/>
            <person name="Musashino K."/>
            <person name="Yuuki H."/>
            <person name="Oshima A."/>
            <person name="Sasaki N."/>
            <person name="Aotsuka S."/>
            <person name="Yoshikawa Y."/>
            <person name="Matsunawa H."/>
            <person name="Ichihara T."/>
            <person name="Shiohata N."/>
            <person name="Sano S."/>
            <person name="Moriya S."/>
            <person name="Momiyama H."/>
            <person name="Satoh N."/>
            <person name="Takami S."/>
            <person name="Terashima Y."/>
            <person name="Suzuki O."/>
            <person name="Nakagawa S."/>
            <person name="Senoh A."/>
            <person name="Mizoguchi H."/>
            <person name="Goto Y."/>
            <person name="Shimizu F."/>
            <person name="Wakebe H."/>
            <person name="Hishigaki H."/>
            <person name="Watanabe T."/>
            <person name="Sugiyama A."/>
            <person name="Takemoto M."/>
            <person name="Kawakami B."/>
            <person name="Yamazaki M."/>
            <person name="Watanabe K."/>
            <person name="Kumagai A."/>
            <person name="Itakura S."/>
            <person name="Fukuzumi Y."/>
            <person name="Fujimori Y."/>
            <person name="Komiyama M."/>
            <person name="Tashiro H."/>
            <person name="Tanigami A."/>
            <person name="Fujiwara T."/>
            <person name="Ono T."/>
            <person name="Yamada K."/>
            <person name="Fujii Y."/>
            <person name="Ozaki K."/>
            <person name="Hirao M."/>
            <person name="Ohmori Y."/>
            <person name="Kawabata A."/>
            <person name="Hikiji T."/>
            <person name="Kobatake N."/>
            <person name="Inagaki H."/>
            <person name="Ikema Y."/>
            <person name="Okamoto S."/>
            <person name="Okitani R."/>
            <person name="Kawakami T."/>
            <person name="Noguchi S."/>
            <person name="Itoh T."/>
            <person name="Shigeta K."/>
            <person name="Senba T."/>
            <person name="Matsumura K."/>
            <person name="Nakajima Y."/>
            <person name="Mizuno T."/>
            <person name="Morinaga M."/>
            <person name="Sasaki M."/>
            <person name="Togashi T."/>
            <person name="Oyama M."/>
            <person name="Hata H."/>
            <person name="Watanabe M."/>
            <person name="Komatsu T."/>
            <person name="Mizushima-Sugano J."/>
            <person name="Satoh T."/>
            <person name="Shirai Y."/>
            <person name="Takahashi Y."/>
            <person name="Nakagawa K."/>
            <person name="Okumura K."/>
            <person name="Nagase T."/>
            <person name="Nomura N."/>
            <person name="Kikuchi H."/>
            <person name="Masuho Y."/>
            <person name="Yamashita R."/>
            <person name="Nakai K."/>
            <person name="Yada T."/>
            <person name="Nakamura Y."/>
            <person name="Ohara O."/>
            <person name="Isogai T."/>
            <person name="Sugano S."/>
        </authorList>
    </citation>
    <scope>NUCLEOTIDE SEQUENCE [LARGE SCALE MRNA] (ISOFORMS ALPHA-1; ALPHA-2 AND 3)</scope>
    <source>
        <tissue>Brain</tissue>
        <tissue>Hippocampus</tissue>
        <tissue>Small intestine</tissue>
    </source>
</reference>
<reference key="5">
    <citation type="journal article" date="2005" name="Nature">
        <title>Generation and annotation of the DNA sequences of human chromosomes 2 and 4.</title>
        <authorList>
            <person name="Hillier L.W."/>
            <person name="Graves T.A."/>
            <person name="Fulton R.S."/>
            <person name="Fulton L.A."/>
            <person name="Pepin K.H."/>
            <person name="Minx P."/>
            <person name="Wagner-McPherson C."/>
            <person name="Layman D."/>
            <person name="Wylie K."/>
            <person name="Sekhon M."/>
            <person name="Becker M.C."/>
            <person name="Fewell G.A."/>
            <person name="Delehaunty K.D."/>
            <person name="Miner T.L."/>
            <person name="Nash W.E."/>
            <person name="Kremitzki C."/>
            <person name="Oddy L."/>
            <person name="Du H."/>
            <person name="Sun H."/>
            <person name="Bradshaw-Cordum H."/>
            <person name="Ali J."/>
            <person name="Carter J."/>
            <person name="Cordes M."/>
            <person name="Harris A."/>
            <person name="Isak A."/>
            <person name="van Brunt A."/>
            <person name="Nguyen C."/>
            <person name="Du F."/>
            <person name="Courtney L."/>
            <person name="Kalicki J."/>
            <person name="Ozersky P."/>
            <person name="Abbott S."/>
            <person name="Armstrong J."/>
            <person name="Belter E.A."/>
            <person name="Caruso L."/>
            <person name="Cedroni M."/>
            <person name="Cotton M."/>
            <person name="Davidson T."/>
            <person name="Desai A."/>
            <person name="Elliott G."/>
            <person name="Erb T."/>
            <person name="Fronick C."/>
            <person name="Gaige T."/>
            <person name="Haakenson W."/>
            <person name="Haglund K."/>
            <person name="Holmes A."/>
            <person name="Harkins R."/>
            <person name="Kim K."/>
            <person name="Kruchowski S.S."/>
            <person name="Strong C.M."/>
            <person name="Grewal N."/>
            <person name="Goyea E."/>
            <person name="Hou S."/>
            <person name="Levy A."/>
            <person name="Martinka S."/>
            <person name="Mead K."/>
            <person name="McLellan M.D."/>
            <person name="Meyer R."/>
            <person name="Randall-Maher J."/>
            <person name="Tomlinson C."/>
            <person name="Dauphin-Kohlberg S."/>
            <person name="Kozlowicz-Reilly A."/>
            <person name="Shah N."/>
            <person name="Swearengen-Shahid S."/>
            <person name="Snider J."/>
            <person name="Strong J.T."/>
            <person name="Thompson J."/>
            <person name="Yoakum M."/>
            <person name="Leonard S."/>
            <person name="Pearman C."/>
            <person name="Trani L."/>
            <person name="Radionenko M."/>
            <person name="Waligorski J.E."/>
            <person name="Wang C."/>
            <person name="Rock S.M."/>
            <person name="Tin-Wollam A.-M."/>
            <person name="Maupin R."/>
            <person name="Latreille P."/>
            <person name="Wendl M.C."/>
            <person name="Yang S.-P."/>
            <person name="Pohl C."/>
            <person name="Wallis J.W."/>
            <person name="Spieth J."/>
            <person name="Bieri T.A."/>
            <person name="Berkowicz N."/>
            <person name="Nelson J.O."/>
            <person name="Osborne J."/>
            <person name="Ding L."/>
            <person name="Meyer R."/>
            <person name="Sabo A."/>
            <person name="Shotland Y."/>
            <person name="Sinha P."/>
            <person name="Wohldmann P.E."/>
            <person name="Cook L.L."/>
            <person name="Hickenbotham M.T."/>
            <person name="Eldred J."/>
            <person name="Williams D."/>
            <person name="Jones T.A."/>
            <person name="She X."/>
            <person name="Ciccarelli F.D."/>
            <person name="Izaurralde E."/>
            <person name="Taylor J."/>
            <person name="Schmutz J."/>
            <person name="Myers R.M."/>
            <person name="Cox D.R."/>
            <person name="Huang X."/>
            <person name="McPherson J.D."/>
            <person name="Mardis E.R."/>
            <person name="Clifton S.W."/>
            <person name="Warren W.C."/>
            <person name="Chinwalla A.T."/>
            <person name="Eddy S.R."/>
            <person name="Marra M.A."/>
            <person name="Ovcharenko I."/>
            <person name="Furey T.S."/>
            <person name="Miller W."/>
            <person name="Eichler E.E."/>
            <person name="Bork P."/>
            <person name="Suyama M."/>
            <person name="Torrents D."/>
            <person name="Waterston R.H."/>
            <person name="Wilson R.K."/>
        </authorList>
    </citation>
    <scope>NUCLEOTIDE SEQUENCE [LARGE SCALE GENOMIC DNA]</scope>
</reference>
<reference key="6">
    <citation type="submission" date="2005-09" db="EMBL/GenBank/DDBJ databases">
        <authorList>
            <person name="Mural R.J."/>
            <person name="Istrail S."/>
            <person name="Sutton G.G."/>
            <person name="Florea L."/>
            <person name="Halpern A.L."/>
            <person name="Mobarry C.M."/>
            <person name="Lippert R."/>
            <person name="Walenz B."/>
            <person name="Shatkay H."/>
            <person name="Dew I."/>
            <person name="Miller J.R."/>
            <person name="Flanigan M.J."/>
            <person name="Edwards N.J."/>
            <person name="Bolanos R."/>
            <person name="Fasulo D."/>
            <person name="Halldorsson B.V."/>
            <person name="Hannenhalli S."/>
            <person name="Turner R."/>
            <person name="Yooseph S."/>
            <person name="Lu F."/>
            <person name="Nusskern D.R."/>
            <person name="Shue B.C."/>
            <person name="Zheng X.H."/>
            <person name="Zhong F."/>
            <person name="Delcher A.L."/>
            <person name="Huson D.H."/>
            <person name="Kravitz S.A."/>
            <person name="Mouchard L."/>
            <person name="Reinert K."/>
            <person name="Remington K.A."/>
            <person name="Clark A.G."/>
            <person name="Waterman M.S."/>
            <person name="Eichler E.E."/>
            <person name="Adams M.D."/>
            <person name="Hunkapiller M.W."/>
            <person name="Myers E.W."/>
            <person name="Venter J.C."/>
        </authorList>
    </citation>
    <scope>NUCLEOTIDE SEQUENCE [LARGE SCALE GENOMIC DNA]</scope>
</reference>
<reference key="7">
    <citation type="journal article" date="2004" name="Genome Res.">
        <title>The status, quality, and expansion of the NIH full-length cDNA project: the Mammalian Gene Collection (MGC).</title>
        <authorList>
            <consortium name="The MGC Project Team"/>
        </authorList>
    </citation>
    <scope>NUCLEOTIDE SEQUENCE [LARGE SCALE MRNA] (ISOFORM ALPHA-2)</scope>
    <source>
        <tissue>Eye</tissue>
    </source>
</reference>
<reference key="8">
    <citation type="journal article" date="1995" name="Eur. J. Biochem.">
        <title>Promoter region of the transcriptional unit for human alpha 1-chimaerin, a neuron-specific GTPase-activating protein for p21rac.</title>
        <authorList>
            <person name="Dong J.M."/>
            <person name="Smith P."/>
            <person name="Hall C."/>
            <person name="Lim L."/>
        </authorList>
    </citation>
    <scope>PARTIAL NUCLEOTIDE SEQUENCE [GENOMIC DNA] (ISOFORM ALPHA-1)</scope>
    <source>
        <tissue>Fibroblast</tissue>
    </source>
</reference>
<reference key="9">
    <citation type="journal article" date="1990" name="Biochem. J.">
        <title>Human brain n-chimaerin cDNA encodes a novel phorbol ester receptor.</title>
        <authorList>
            <person name="Ahmed S."/>
            <person name="Kozma R."/>
            <person name="Monfries C."/>
            <person name="Hall C."/>
            <person name="Lim H.H."/>
            <person name="Smith P."/>
            <person name="Lim L."/>
        </authorList>
    </citation>
    <scope>PHORBOL-ESTER BINDING</scope>
</reference>
<reference key="10">
    <citation type="journal article" date="2009" name="Anal. Chem.">
        <title>Lys-N and trypsin cover complementary parts of the phosphoproteome in a refined SCX-based approach.</title>
        <authorList>
            <person name="Gauci S."/>
            <person name="Helbig A.O."/>
            <person name="Slijper M."/>
            <person name="Krijgsveld J."/>
            <person name="Heck A.J."/>
            <person name="Mohammed S."/>
        </authorList>
    </citation>
    <scope>ACETYLATION [LARGE SCALE ANALYSIS] AT ALA-2</scope>
    <scope>CLEAVAGE OF INITIATOR METHIONINE [LARGE SCALE ANALYSIS]</scope>
    <scope>IDENTIFICATION BY MASS SPECTROMETRY [LARGE SCALE ANALYSIS]</scope>
</reference>
<reference key="11">
    <citation type="journal article" date="2013" name="J. Proteome Res.">
        <title>Toward a comprehensive characterization of a human cancer cell phosphoproteome.</title>
        <authorList>
            <person name="Zhou H."/>
            <person name="Di Palma S."/>
            <person name="Preisinger C."/>
            <person name="Peng M."/>
            <person name="Polat A.N."/>
            <person name="Heck A.J."/>
            <person name="Mohammed S."/>
        </authorList>
    </citation>
    <scope>PHOSPHORYLATION [LARGE SCALE ANALYSIS] AT THR-192</scope>
    <scope>IDENTIFICATION BY MASS SPECTROMETRY [LARGE SCALE ANALYSIS]</scope>
    <source>
        <tissue>Cervix carcinoma</tissue>
    </source>
</reference>
<reference key="12">
    <citation type="submission" date="2011-07" db="PDB data bank">
        <title>Crystal structure of human chimerin 1 (CHN1).</title>
        <authorList>
            <consortium name="Structural genomics consortium (SGC)"/>
        </authorList>
    </citation>
    <scope>X-RAY CRYSTALLOGRAPHY (1.80 ANGSTROMS) OF 15-459 IN COMPLEX WITH ZINC IONS</scope>
</reference>
<reference key="13">
    <citation type="journal article" date="2008" name="Science">
        <title>Human CHN1 mutations hyperactivate alpha2-chimaerin and cause Duane's retraction syndrome.</title>
        <authorList>
            <person name="Miyake N."/>
            <person name="Chilton J."/>
            <person name="Psatha M."/>
            <person name="Cheng L."/>
            <person name="Andrews C."/>
            <person name="Chan W.-M."/>
            <person name="Law K."/>
            <person name="Crosier M."/>
            <person name="Lindsay S."/>
            <person name="Cheung M."/>
            <person name="Allen J."/>
            <person name="Gutowski N.J."/>
            <person name="Ellard S."/>
            <person name="Young E."/>
            <person name="Iannaccone A."/>
            <person name="Appukuttan B."/>
            <person name="Stout J.T."/>
            <person name="Christiansen S."/>
            <person name="Ciccarelli M.L."/>
            <person name="Baldi A."/>
            <person name="Campioni M."/>
            <person name="Zenteno J.C."/>
            <person name="Davenport D."/>
            <person name="Mariani L.E."/>
            <person name="Sahin M."/>
            <person name="Guthrie S."/>
            <person name="Engle E.C."/>
        </authorList>
    </citation>
    <scope>VARIANTS DURS2 PHE-20; MET-126; HIS-143; VAL-223; SER-228; GLN-252 AND LYS-313</scope>
    <scope>CHARACTERIZATION OF VARIANTS DURS2 PHE-20; MET-126; HIS-143; VAL-223; SER-228; GLN-252 AND LYS-313</scope>
</reference>
<proteinExistence type="evidence at protein level"/>
<sequence>MALTLFDTDEYRPPVWKSYLYQLQQEAPHPRRITCTCEVENRPKYYGREFHGMISREAADQLLIVAEGSYLIRESQRQPGTYTLALRFGSQTRNFRLYYDGKHFVGEKRFESIHDLVTDGLITLYIETKAAEYIAKMTINPIYEHVGYTTLNREPAYKKHMPVLKETHDERDSTGQDGVSEKRLTSLVRRATLKENEQIPKYEKIHNFKVHTFRGPHWCEYCANFMWGLIAQGVKCADCGLNVHKQCSKMVPNDCKPDLKHVKKVYSCDLTTLVKAHTTKRPMVVDMCIREIESRGLNSEGLYRVSGFSDLIEDVKMAFDRDGEKADISVNMYEDINIITGALKLYFRDLPIPLITYDAYPKFIESAKIMDPDEQLETLHEALKLLPPAHCETLRYLMAHLKRVTLHEKENLMNAENLGIVFGPTLMRSPELDAMAALNDIRYQRLVVELLIKNEDILF</sequence>
<gene>
    <name type="primary">CHN1</name>
    <name type="synonym">ARHGAP2</name>
    <name type="synonym">CHN</name>
</gene>
<organism>
    <name type="scientific">Homo sapiens</name>
    <name type="common">Human</name>
    <dbReference type="NCBI Taxonomy" id="9606"/>
    <lineage>
        <taxon>Eukaryota</taxon>
        <taxon>Metazoa</taxon>
        <taxon>Chordata</taxon>
        <taxon>Craniata</taxon>
        <taxon>Vertebrata</taxon>
        <taxon>Euteleostomi</taxon>
        <taxon>Mammalia</taxon>
        <taxon>Eutheria</taxon>
        <taxon>Euarchontoglires</taxon>
        <taxon>Primates</taxon>
        <taxon>Haplorrhini</taxon>
        <taxon>Catarrhini</taxon>
        <taxon>Hominidae</taxon>
        <taxon>Homo</taxon>
    </lineage>
</organism>
<accession>P15882</accession>
<accession>A8K1M6</accession>
<accession>B3KNU6</accession>
<accession>B4DV19</accession>
<accession>Q53SD6</accession>
<accession>Q53SH5</accession>
<accession>Q96FB0</accession>
<dbReference type="EMBL" id="X51408">
    <property type="protein sequence ID" value="CAA35769.1"/>
    <property type="status" value="ALT_INIT"/>
    <property type="molecule type" value="mRNA"/>
</dbReference>
<dbReference type="EMBL" id="Z22641">
    <property type="protein sequence ID" value="CAA80354.1"/>
    <property type="molecule type" value="mRNA"/>
</dbReference>
<dbReference type="EMBL" id="AK055060">
    <property type="protein sequence ID" value="BAG51458.1"/>
    <property type="molecule type" value="mRNA"/>
</dbReference>
<dbReference type="EMBL" id="AK289941">
    <property type="protein sequence ID" value="BAF82630.1"/>
    <property type="molecule type" value="mRNA"/>
</dbReference>
<dbReference type="EMBL" id="AK300890">
    <property type="protein sequence ID" value="BAG62531.1"/>
    <property type="molecule type" value="mRNA"/>
</dbReference>
<dbReference type="EMBL" id="AC007435">
    <property type="status" value="NOT_ANNOTATED_CDS"/>
    <property type="molecule type" value="Genomic_DNA"/>
</dbReference>
<dbReference type="EMBL" id="AC018890">
    <property type="protein sequence ID" value="AAY14688.1"/>
    <property type="molecule type" value="Genomic_DNA"/>
</dbReference>
<dbReference type="EMBL" id="AC020596">
    <property type="protein sequence ID" value="AAY14940.1"/>
    <property type="molecule type" value="Genomic_DNA"/>
</dbReference>
<dbReference type="EMBL" id="CH471058">
    <property type="protein sequence ID" value="EAX11117.1"/>
    <property type="molecule type" value="Genomic_DNA"/>
</dbReference>
<dbReference type="EMBL" id="CH471058">
    <property type="protein sequence ID" value="EAX11118.1"/>
    <property type="molecule type" value="Genomic_DNA"/>
</dbReference>
<dbReference type="EMBL" id="CH471058">
    <property type="protein sequence ID" value="EAX11119.1"/>
    <property type="molecule type" value="Genomic_DNA"/>
</dbReference>
<dbReference type="EMBL" id="BC011393">
    <property type="protein sequence ID" value="AAH11393.1"/>
    <property type="molecule type" value="mRNA"/>
</dbReference>
<dbReference type="EMBL" id="S75654">
    <property type="protein sequence ID" value="AAB33506.1"/>
    <property type="molecule type" value="Genomic_DNA"/>
</dbReference>
<dbReference type="CCDS" id="CCDS46454.1">
    <molecule id="P15882-3"/>
</dbReference>
<dbReference type="CCDS" id="CCDS46455.1">
    <molecule id="P15882-1"/>
</dbReference>
<dbReference type="CCDS" id="CCDS56147.1">
    <molecule id="P15882-2"/>
</dbReference>
<dbReference type="PIR" id="A48090">
    <property type="entry name" value="A48090"/>
</dbReference>
<dbReference type="PIR" id="I53329">
    <property type="entry name" value="I53329"/>
</dbReference>
<dbReference type="RefSeq" id="NP_001020372.2">
    <molecule id="P15882-3"/>
    <property type="nucleotide sequence ID" value="NM_001025201.4"/>
</dbReference>
<dbReference type="RefSeq" id="NP_001193531.1">
    <molecule id="P15882-2"/>
    <property type="nucleotide sequence ID" value="NM_001206602.2"/>
</dbReference>
<dbReference type="RefSeq" id="NP_001358442.1">
    <molecule id="P15882-1"/>
    <property type="nucleotide sequence ID" value="NM_001371513.1"/>
</dbReference>
<dbReference type="RefSeq" id="NP_001813.1">
    <molecule id="P15882-1"/>
    <property type="nucleotide sequence ID" value="NM_001822.7"/>
</dbReference>
<dbReference type="PDB" id="2OSA">
    <property type="method" value="X-ray"/>
    <property type="resolution" value="1.80 A"/>
    <property type="chains" value="A=260-459"/>
</dbReference>
<dbReference type="PDB" id="3CXL">
    <property type="method" value="X-ray"/>
    <property type="resolution" value="2.60 A"/>
    <property type="chains" value="A=15-459"/>
</dbReference>
<dbReference type="PDBsum" id="2OSA"/>
<dbReference type="PDBsum" id="3CXL"/>
<dbReference type="SMR" id="P15882"/>
<dbReference type="BioGRID" id="107547">
    <property type="interactions" value="34"/>
</dbReference>
<dbReference type="DIP" id="DIP-42177N"/>
<dbReference type="FunCoup" id="P15882">
    <property type="interactions" value="862"/>
</dbReference>
<dbReference type="IntAct" id="P15882">
    <property type="interactions" value="18"/>
</dbReference>
<dbReference type="MINT" id="P15882"/>
<dbReference type="STRING" id="9606.ENSP00000386741"/>
<dbReference type="iPTMnet" id="P15882"/>
<dbReference type="PhosphoSitePlus" id="P15882"/>
<dbReference type="SwissPalm" id="P15882"/>
<dbReference type="BioMuta" id="CHN1"/>
<dbReference type="DMDM" id="21903393"/>
<dbReference type="jPOST" id="P15882"/>
<dbReference type="MassIVE" id="P15882"/>
<dbReference type="PaxDb" id="9606-ENSP00000386741"/>
<dbReference type="PeptideAtlas" id="P15882"/>
<dbReference type="ProteomicsDB" id="53234">
    <molecule id="P15882-1"/>
</dbReference>
<dbReference type="ProteomicsDB" id="53235">
    <molecule id="P15882-2"/>
</dbReference>
<dbReference type="ProteomicsDB" id="53236">
    <molecule id="P15882-3"/>
</dbReference>
<dbReference type="Pumba" id="P15882"/>
<dbReference type="Antibodypedia" id="33886">
    <property type="antibodies" value="466 antibodies from 29 providers"/>
</dbReference>
<dbReference type="DNASU" id="1123"/>
<dbReference type="Ensembl" id="ENST00000295497.13">
    <molecule id="P15882-2"/>
    <property type="protein sequence ID" value="ENSP00000295497.7"/>
    <property type="gene ID" value="ENSG00000128656.15"/>
</dbReference>
<dbReference type="Ensembl" id="ENST00000409156.7">
    <molecule id="P15882-3"/>
    <property type="protein sequence ID" value="ENSP00000386470.3"/>
    <property type="gene ID" value="ENSG00000128656.15"/>
</dbReference>
<dbReference type="Ensembl" id="ENST00000409900.9">
    <molecule id="P15882-1"/>
    <property type="protein sequence ID" value="ENSP00000386741.4"/>
    <property type="gene ID" value="ENSG00000128656.15"/>
</dbReference>
<dbReference type="GeneID" id="1123"/>
<dbReference type="KEGG" id="hsa:1123"/>
<dbReference type="MANE-Select" id="ENST00000409900.9">
    <property type="protein sequence ID" value="ENSP00000386741.4"/>
    <property type="RefSeq nucleotide sequence ID" value="NM_001822.7"/>
    <property type="RefSeq protein sequence ID" value="NP_001813.1"/>
</dbReference>
<dbReference type="UCSC" id="uc002ujg.4">
    <molecule id="P15882-1"/>
    <property type="organism name" value="human"/>
</dbReference>
<dbReference type="AGR" id="HGNC:1943"/>
<dbReference type="CTD" id="1123"/>
<dbReference type="DisGeNET" id="1123"/>
<dbReference type="GeneCards" id="CHN1"/>
<dbReference type="GeneReviews" id="CHN1"/>
<dbReference type="HGNC" id="HGNC:1943">
    <property type="gene designation" value="CHN1"/>
</dbReference>
<dbReference type="HPA" id="ENSG00000128656">
    <property type="expression patterns" value="Tissue enriched (brain)"/>
</dbReference>
<dbReference type="MalaCards" id="CHN1"/>
<dbReference type="MIM" id="118423">
    <property type="type" value="gene"/>
</dbReference>
<dbReference type="MIM" id="604356">
    <property type="type" value="phenotype"/>
</dbReference>
<dbReference type="neXtProt" id="NX_P15882"/>
<dbReference type="OpenTargets" id="ENSG00000128656"/>
<dbReference type="Orphanet" id="233">
    <property type="disease" value="Duane retraction syndrome"/>
</dbReference>
<dbReference type="PharmGKB" id="PA26473"/>
<dbReference type="VEuPathDB" id="HostDB:ENSG00000128656"/>
<dbReference type="eggNOG" id="KOG1453">
    <property type="taxonomic scope" value="Eukaryota"/>
</dbReference>
<dbReference type="GeneTree" id="ENSGT01030000234635"/>
<dbReference type="HOGENOM" id="CLU_015883_0_1_1"/>
<dbReference type="InParanoid" id="P15882"/>
<dbReference type="OrthoDB" id="3196451at2759"/>
<dbReference type="PAN-GO" id="P15882">
    <property type="GO annotations" value="4 GO annotations based on evolutionary models"/>
</dbReference>
<dbReference type="PhylomeDB" id="P15882"/>
<dbReference type="TreeFam" id="TF342052"/>
<dbReference type="PathwayCommons" id="P15882"/>
<dbReference type="Reactome" id="R-HSA-9013148">
    <property type="pathway name" value="CDC42 GTPase cycle"/>
</dbReference>
<dbReference type="Reactome" id="R-HSA-9013149">
    <property type="pathway name" value="RAC1 GTPase cycle"/>
</dbReference>
<dbReference type="SignaLink" id="P15882"/>
<dbReference type="SIGNOR" id="P15882"/>
<dbReference type="BioGRID-ORCS" id="1123">
    <property type="hits" value="17 hits in 1147 CRISPR screens"/>
</dbReference>
<dbReference type="ChiTaRS" id="CHN1">
    <property type="organism name" value="human"/>
</dbReference>
<dbReference type="EvolutionaryTrace" id="P15882"/>
<dbReference type="GenomeRNAi" id="1123"/>
<dbReference type="Pharos" id="P15882">
    <property type="development level" value="Tbio"/>
</dbReference>
<dbReference type="PRO" id="PR:P15882"/>
<dbReference type="Proteomes" id="UP000005640">
    <property type="component" value="Chromosome 2"/>
</dbReference>
<dbReference type="RNAct" id="P15882">
    <property type="molecule type" value="protein"/>
</dbReference>
<dbReference type="Bgee" id="ENSG00000128656">
    <property type="expression patterns" value="Expressed in middle temporal gyrus and 196 other cell types or tissues"/>
</dbReference>
<dbReference type="ExpressionAtlas" id="P15882">
    <property type="expression patterns" value="baseline and differential"/>
</dbReference>
<dbReference type="GO" id="GO:0005829">
    <property type="term" value="C:cytosol"/>
    <property type="evidence" value="ECO:0000304"/>
    <property type="project" value="Reactome"/>
</dbReference>
<dbReference type="GO" id="GO:0046875">
    <property type="term" value="F:ephrin receptor binding"/>
    <property type="evidence" value="ECO:0000318"/>
    <property type="project" value="GO_Central"/>
</dbReference>
<dbReference type="GO" id="GO:0005096">
    <property type="term" value="F:GTPase activator activity"/>
    <property type="evidence" value="ECO:0000318"/>
    <property type="project" value="GO_Central"/>
</dbReference>
<dbReference type="GO" id="GO:0008270">
    <property type="term" value="F:zinc ion binding"/>
    <property type="evidence" value="ECO:0007669"/>
    <property type="project" value="UniProtKB-KW"/>
</dbReference>
<dbReference type="GO" id="GO:0048013">
    <property type="term" value="P:ephrin receptor signaling pathway"/>
    <property type="evidence" value="ECO:0000250"/>
    <property type="project" value="UniProtKB"/>
</dbReference>
<dbReference type="GO" id="GO:0008045">
    <property type="term" value="P:motor neuron axon guidance"/>
    <property type="evidence" value="ECO:0000250"/>
    <property type="project" value="UniProtKB"/>
</dbReference>
<dbReference type="GO" id="GO:0050770">
    <property type="term" value="P:regulation of axonogenesis"/>
    <property type="evidence" value="ECO:0000250"/>
    <property type="project" value="UniProtKB"/>
</dbReference>
<dbReference type="GO" id="GO:0051056">
    <property type="term" value="P:regulation of small GTPase mediated signal transduction"/>
    <property type="evidence" value="ECO:0000304"/>
    <property type="project" value="Reactome"/>
</dbReference>
<dbReference type="CDD" id="cd20856">
    <property type="entry name" value="C1_alphaCHN"/>
    <property type="match status" value="1"/>
</dbReference>
<dbReference type="CDD" id="cd04372">
    <property type="entry name" value="RhoGAP_chimaerin"/>
    <property type="match status" value="1"/>
</dbReference>
<dbReference type="CDD" id="cd10352">
    <property type="entry name" value="SH2_a2chimerin_b2chimerin"/>
    <property type="match status" value="1"/>
</dbReference>
<dbReference type="FunFam" id="1.10.555.10:FF:000005">
    <property type="entry name" value="Chimaerin"/>
    <property type="match status" value="1"/>
</dbReference>
<dbReference type="FunFam" id="3.30.505.10:FF:000019">
    <property type="entry name" value="Chimaerin"/>
    <property type="match status" value="1"/>
</dbReference>
<dbReference type="FunFam" id="3.30.60.20:FF:000030">
    <property type="entry name" value="Chimaerin"/>
    <property type="match status" value="1"/>
</dbReference>
<dbReference type="Gene3D" id="3.30.60.20">
    <property type="match status" value="1"/>
</dbReference>
<dbReference type="Gene3D" id="1.10.555.10">
    <property type="entry name" value="Rho GTPase activation protein"/>
    <property type="match status" value="1"/>
</dbReference>
<dbReference type="Gene3D" id="3.30.505.10">
    <property type="entry name" value="SH2 domain"/>
    <property type="match status" value="1"/>
</dbReference>
<dbReference type="InterPro" id="IPR046349">
    <property type="entry name" value="C1-like_sf"/>
</dbReference>
<dbReference type="InterPro" id="IPR035840">
    <property type="entry name" value="Chimaerin_SH2"/>
</dbReference>
<dbReference type="InterPro" id="IPR017356">
    <property type="entry name" value="CHN1/CHN2"/>
</dbReference>
<dbReference type="InterPro" id="IPR020454">
    <property type="entry name" value="DAG/PE-bd"/>
</dbReference>
<dbReference type="InterPro" id="IPR002219">
    <property type="entry name" value="PE/DAG-bd"/>
</dbReference>
<dbReference type="InterPro" id="IPR051854">
    <property type="entry name" value="Rho-type_GAP"/>
</dbReference>
<dbReference type="InterPro" id="IPR008936">
    <property type="entry name" value="Rho_GTPase_activation_prot"/>
</dbReference>
<dbReference type="InterPro" id="IPR037860">
    <property type="entry name" value="RhoGAP_chimaerin"/>
</dbReference>
<dbReference type="InterPro" id="IPR000198">
    <property type="entry name" value="RhoGAP_dom"/>
</dbReference>
<dbReference type="InterPro" id="IPR000980">
    <property type="entry name" value="SH2"/>
</dbReference>
<dbReference type="InterPro" id="IPR036860">
    <property type="entry name" value="SH2_dom_sf"/>
</dbReference>
<dbReference type="PANTHER" id="PTHR46075">
    <property type="entry name" value="CHIMERIN FAMILY MEMBER"/>
    <property type="match status" value="1"/>
</dbReference>
<dbReference type="PANTHER" id="PTHR46075:SF1">
    <property type="entry name" value="N-CHIMAERIN"/>
    <property type="match status" value="1"/>
</dbReference>
<dbReference type="Pfam" id="PF00130">
    <property type="entry name" value="C1_1"/>
    <property type="match status" value="1"/>
</dbReference>
<dbReference type="Pfam" id="PF00620">
    <property type="entry name" value="RhoGAP"/>
    <property type="match status" value="1"/>
</dbReference>
<dbReference type="Pfam" id="PF00017">
    <property type="entry name" value="SH2"/>
    <property type="match status" value="1"/>
</dbReference>
<dbReference type="PIRSF" id="PIRSF038015">
    <property type="entry name" value="N-chimaerin"/>
    <property type="match status" value="1"/>
</dbReference>
<dbReference type="PRINTS" id="PR00008">
    <property type="entry name" value="DAGPEDOMAIN"/>
</dbReference>
<dbReference type="SMART" id="SM00109">
    <property type="entry name" value="C1"/>
    <property type="match status" value="1"/>
</dbReference>
<dbReference type="SMART" id="SM00324">
    <property type="entry name" value="RhoGAP"/>
    <property type="match status" value="1"/>
</dbReference>
<dbReference type="SMART" id="SM00252">
    <property type="entry name" value="SH2"/>
    <property type="match status" value="1"/>
</dbReference>
<dbReference type="SUPFAM" id="SSF57889">
    <property type="entry name" value="Cysteine-rich domain"/>
    <property type="match status" value="1"/>
</dbReference>
<dbReference type="SUPFAM" id="SSF48350">
    <property type="entry name" value="GTPase activation domain, GAP"/>
    <property type="match status" value="1"/>
</dbReference>
<dbReference type="SUPFAM" id="SSF55550">
    <property type="entry name" value="SH2 domain"/>
    <property type="match status" value="1"/>
</dbReference>
<dbReference type="PROSITE" id="PS50238">
    <property type="entry name" value="RHOGAP"/>
    <property type="match status" value="1"/>
</dbReference>
<dbReference type="PROSITE" id="PS50001">
    <property type="entry name" value="SH2"/>
    <property type="match status" value="1"/>
</dbReference>
<dbReference type="PROSITE" id="PS00479">
    <property type="entry name" value="ZF_DAG_PE_1"/>
    <property type="match status" value="1"/>
</dbReference>
<dbReference type="PROSITE" id="PS50081">
    <property type="entry name" value="ZF_DAG_PE_2"/>
    <property type="match status" value="1"/>
</dbReference>
<evidence type="ECO:0000250" key="1"/>
<evidence type="ECO:0000250" key="2">
    <source>
        <dbReference type="UniProtKB" id="P30337"/>
    </source>
</evidence>
<evidence type="ECO:0000255" key="3">
    <source>
        <dbReference type="PROSITE-ProRule" id="PRU00172"/>
    </source>
</evidence>
<evidence type="ECO:0000255" key="4">
    <source>
        <dbReference type="PROSITE-ProRule" id="PRU00191"/>
    </source>
</evidence>
<evidence type="ECO:0000255" key="5">
    <source>
        <dbReference type="PROSITE-ProRule" id="PRU00226"/>
    </source>
</evidence>
<evidence type="ECO:0000269" key="6">
    <source>
    </source>
</evidence>
<evidence type="ECO:0000303" key="7">
    <source>
    </source>
</evidence>
<evidence type="ECO:0000303" key="8">
    <source>
    </source>
</evidence>
<evidence type="ECO:0000305" key="9"/>
<evidence type="ECO:0007744" key="10">
    <source>
    </source>
</evidence>
<evidence type="ECO:0007744" key="11">
    <source>
    </source>
</evidence>
<evidence type="ECO:0007829" key="12">
    <source>
        <dbReference type="PDB" id="2OSA"/>
    </source>
</evidence>
<evidence type="ECO:0007829" key="13">
    <source>
        <dbReference type="PDB" id="3CXL"/>
    </source>
</evidence>
<name>CHIN_HUMAN</name>
<comment type="function">
    <text>GTPase-activating protein for p21-rac and a phorbol ester receptor. Involved in the assembly of neuronal locomotor circuits as a direct effector of EPHA4 in axon guidance.</text>
</comment>
<comment type="subunit">
    <text evidence="1">Interacts with EPHA4; effector of EPHA4 in axon guidance linking EPHA4 activation to RAC1 regulation.</text>
</comment>
<comment type="interaction">
    <interactant intactId="EBI-718947">
        <id>P15882</id>
    </interactant>
    <interactant intactId="EBI-13280688">
        <id>Q8NFD2</id>
        <label>ANKK1</label>
    </interactant>
    <organismsDiffer>false</organismsDiffer>
    <experiments>3</experiments>
</comment>
<comment type="interaction">
    <interactant intactId="EBI-718947">
        <id>P15882</id>
    </interactant>
    <interactant intactId="EBI-10329202">
        <id>Q9Y5R4</id>
        <label>HEMK1</label>
    </interactant>
    <organismsDiffer>false</organismsDiffer>
    <experiments>8</experiments>
</comment>
<comment type="interaction">
    <interactant intactId="EBI-718947">
        <id>P15882</id>
    </interactant>
    <interactant intactId="EBI-959949">
        <id>P28482</id>
        <label>MAPK1</label>
    </interactant>
    <organismsDiffer>false</organismsDiffer>
    <experiments>3</experiments>
</comment>
<comment type="interaction">
    <interactant intactId="EBI-718947">
        <id>P15882</id>
    </interactant>
    <interactant intactId="EBI-713635">
        <id>O43639</id>
        <label>NCK2</label>
    </interactant>
    <organismsDiffer>false</organismsDiffer>
    <experiments>16</experiments>
</comment>
<comment type="alternative products">
    <event type="alternative splicing"/>
    <isoform>
        <id>P15882-1</id>
        <name>Alpha-2</name>
        <sequence type="displayed"/>
    </isoform>
    <isoform>
        <id>P15882-2</id>
        <name>Alpha-1</name>
        <sequence type="described" ref="VSP_001636"/>
    </isoform>
    <isoform>
        <id>P15882-3</id>
        <name>3</name>
        <sequence type="described" ref="VSP_043297"/>
    </isoform>
</comment>
<comment type="tissue specificity">
    <text>In neurons in brain regions that are involved in learning and memory processes.</text>
</comment>
<comment type="developmental stage">
    <text>Increases in amount during brain development coincident with synaptogenesis.</text>
</comment>
<comment type="PTM">
    <text evidence="1">Phosphorylated. Phosphorylation is EPHA4 kinase activity-dependent (By similarity).</text>
</comment>
<comment type="disease" evidence="6">
    <disease id="DI-01506">
        <name>Duane retraction syndrome 2</name>
        <acronym>DURS2</acronym>
        <description>A form of Duane retraction syndrome, a congenital eye movement disorder characterized by a failure of cranial nerve VI (the abducens nerve) to develop normally, resulting in restriction or absence of abduction, adduction or both, narrowing of the palpebral fissure, and retraction of the globe on attempted adduction. Undiagnosed in children, it can lead to amblyopia, a permanent uncorrectable loss of vision.</description>
        <dbReference type="MIM" id="604356"/>
    </disease>
    <text>The disease is caused by variants affecting the gene represented in this entry.</text>
</comment>
<comment type="sequence caution" evidence="9">
    <conflict type="erroneous initiation">
        <sequence resource="EMBL-CDS" id="CAA35769"/>
    </conflict>
    <text>Truncated N-terminus.</text>
</comment>
<feature type="initiator methionine" description="Removed" evidence="10">
    <location>
        <position position="1"/>
    </location>
</feature>
<feature type="chain" id="PRO_0000056694" description="N-chimaerin">
    <location>
        <begin position="2"/>
        <end position="459"/>
    </location>
</feature>
<feature type="domain" description="SH2" evidence="4">
    <location>
        <begin position="49"/>
        <end position="135"/>
    </location>
</feature>
<feature type="domain" description="Rho-GAP" evidence="3">
    <location>
        <begin position="268"/>
        <end position="459"/>
    </location>
</feature>
<feature type="zinc finger region" description="Phorbol-ester/DAG-type" evidence="5">
    <location>
        <begin position="205"/>
        <end position="255"/>
    </location>
</feature>
<feature type="site" description="Arginine finger; crucial for GTP hydrolysis by stabilizing the transition state" evidence="3">
    <location>
        <position position="304"/>
    </location>
</feature>
<feature type="modified residue" description="N-acetylalanine" evidence="10">
    <location>
        <position position="2"/>
    </location>
</feature>
<feature type="modified residue" description="Phosphothreonine" evidence="11">
    <location>
        <position position="192"/>
    </location>
</feature>
<feature type="modified residue" description="Phosphothreonine" evidence="2">
    <location>
        <position position="340"/>
    </location>
</feature>
<feature type="splice variant" id="VSP_001636" description="In isoform Alpha-1." evidence="7 8">
    <original>MALTLFDTDEYRPPVWKSYLYQLQQEAPHPRRITCTCEVENRPKYYGREFHGMISREAADQLLIVAEGSYLIRESQRQPGTYTLALRFGSQTRNFRLYYDGKHFVGEKRFESIHDLVTDGLITLYIETKAAEYIAKMTINPIYEHVGYTTLNREPAYKKHMPVLKETHDERDSTGQDGVSEKR</original>
    <variation>MPSKESWSGRKTNRAAVHKSKQEGRQQDLLIAALGMKLGSPKSSVTIWQPLKLFAYSQ</variation>
    <location>
        <begin position="1"/>
        <end position="183"/>
    </location>
</feature>
<feature type="splice variant" id="VSP_043297" description="In isoform 3." evidence="7">
    <location>
        <begin position="184"/>
        <end position="209"/>
    </location>
</feature>
<feature type="sequence variant" id="VAR_047940" description="In DURS2; behaves as a dominant gain-of-function allele that increases CHN1 activity in vitro; appears to enhance membrane translocation and CHN1 activity by destabilizing the closed conformation of CHN1 protein in response to phorbol 12-myristate 13-acetate (PMA); dbSNP:rs121912792." evidence="6">
    <original>L</original>
    <variation>F</variation>
    <location>
        <position position="20"/>
    </location>
</feature>
<feature type="sequence variant" id="VAR_047941" description="In DURS2; behaves as a dominant gain-of -function allele that increases CHN1 activity in vitro; dbSNP:rs121912793." evidence="6">
    <original>I</original>
    <variation>M</variation>
    <location>
        <position position="126"/>
    </location>
</feature>
<feature type="sequence variant" id="VAR_047942" description="In DURS2; behaves as a dominant gain-of-function allele that increases CHN1 activity in vitro; appears to enhance membrane translocation and CHN1 activity by destabilizing the closed conformation of CHN1 protein in response to phorbol 12-myristate 13-acetate (PMA); dbSNP:rs121912794." evidence="6">
    <original>Y</original>
    <variation>H</variation>
    <location>
        <position position="143"/>
    </location>
</feature>
<feature type="sequence variant" id="VAR_047943" description="In DURS2; behaves as a dominant gain-of-function allele that increases CHN1 activity in vitro; appears to enhance membrane translocation and CHN1 activity by destabilizing the closed conformation of CHN1 protein in response to phorbol 12-myristate 13-acetate (PMA); dbSNP:rs121912795." evidence="6">
    <original>A</original>
    <variation>V</variation>
    <location>
        <position position="223"/>
    </location>
</feature>
<feature type="sequence variant" id="VAR_047944" description="In DURS2; behaves as a dominant gain-of-function allele that increases CHN1 activity in vitro; dbSNP:rs121912796." evidence="6">
    <original>G</original>
    <variation>S</variation>
    <location>
        <position position="228"/>
    </location>
</feature>
<feature type="sequence variant" id="VAR_047945" description="In DURS2; behaves as a dominant gain-of-function allele that increases CHN1 activity in vitro; appears to enhance membrane translocation and CHN1 activity by destabilizing the closed conformation of CHN1 protein in response to phorbol 12-myristate 13-acetate (PMA); dbSNP:rs121912797." evidence="6">
    <original>P</original>
    <variation>Q</variation>
    <location>
        <position position="252"/>
    </location>
</feature>
<feature type="sequence variant" id="VAR_047946" description="In DURS2; behaves as a dominant gain-of-function allele that increases CHN1 activity in vitro; dbSNP:rs121912798." evidence="6">
    <original>E</original>
    <variation>K</variation>
    <location>
        <position position="313"/>
    </location>
</feature>
<feature type="helix" evidence="13">
    <location>
        <begin position="19"/>
        <end position="26"/>
    </location>
</feature>
<feature type="helix" evidence="13">
    <location>
        <begin position="56"/>
        <end position="63"/>
    </location>
</feature>
<feature type="strand" evidence="13">
    <location>
        <begin position="69"/>
        <end position="74"/>
    </location>
</feature>
<feature type="strand" evidence="13">
    <location>
        <begin position="76"/>
        <end position="78"/>
    </location>
</feature>
<feature type="strand" evidence="13">
    <location>
        <begin position="82"/>
        <end position="87"/>
    </location>
</feature>
<feature type="strand" evidence="13">
    <location>
        <begin position="89"/>
        <end position="96"/>
    </location>
</feature>
<feature type="strand" evidence="13">
    <location>
        <begin position="98"/>
        <end position="107"/>
    </location>
</feature>
<feature type="helix" evidence="13">
    <location>
        <begin position="113"/>
        <end position="129"/>
    </location>
</feature>
<feature type="helix" evidence="13">
    <location>
        <begin position="131"/>
        <end position="136"/>
    </location>
</feature>
<feature type="turn" evidence="13">
    <location>
        <begin position="143"/>
        <end position="145"/>
    </location>
</feature>
<feature type="strand" evidence="13">
    <location>
        <begin position="146"/>
        <end position="148"/>
    </location>
</feature>
<feature type="helix" evidence="13">
    <location>
        <begin position="164"/>
        <end position="166"/>
    </location>
</feature>
<feature type="strand" evidence="13">
    <location>
        <begin position="208"/>
        <end position="211"/>
    </location>
</feature>
<feature type="turn" evidence="13">
    <location>
        <begin position="220"/>
        <end position="222"/>
    </location>
</feature>
<feature type="strand" evidence="13">
    <location>
        <begin position="228"/>
        <end position="230"/>
    </location>
</feature>
<feature type="strand" evidence="13">
    <location>
        <begin position="233"/>
        <end position="236"/>
    </location>
</feature>
<feature type="turn" evidence="13">
    <location>
        <begin position="237"/>
        <end position="239"/>
    </location>
</feature>
<feature type="helix" evidence="13">
    <location>
        <begin position="245"/>
        <end position="248"/>
    </location>
</feature>
<feature type="helix" evidence="13">
    <location>
        <begin position="257"/>
        <end position="261"/>
    </location>
</feature>
<feature type="helix" evidence="12">
    <location>
        <begin position="270"/>
        <end position="277"/>
    </location>
</feature>
<feature type="helix" evidence="12">
    <location>
        <begin position="283"/>
        <end position="295"/>
    </location>
</feature>
<feature type="turn" evidence="12">
    <location>
        <begin position="300"/>
        <end position="304"/>
    </location>
</feature>
<feature type="helix" evidence="12">
    <location>
        <begin position="309"/>
        <end position="322"/>
    </location>
</feature>
<feature type="helix" evidence="12">
    <location>
        <begin position="323"/>
        <end position="325"/>
    </location>
</feature>
<feature type="turn" evidence="12">
    <location>
        <begin position="330"/>
        <end position="332"/>
    </location>
</feature>
<feature type="helix" evidence="12">
    <location>
        <begin position="336"/>
        <end position="348"/>
    </location>
</feature>
<feature type="turn" evidence="12">
    <location>
        <begin position="357"/>
        <end position="359"/>
    </location>
</feature>
<feature type="helix" evidence="12">
    <location>
        <begin position="360"/>
        <end position="368"/>
    </location>
</feature>
<feature type="helix" evidence="12">
    <location>
        <begin position="372"/>
        <end position="384"/>
    </location>
</feature>
<feature type="helix" evidence="12">
    <location>
        <begin position="388"/>
        <end position="406"/>
    </location>
</feature>
<feature type="helix" evidence="12">
    <location>
        <begin position="408"/>
        <end position="411"/>
    </location>
</feature>
<feature type="helix" evidence="12">
    <location>
        <begin position="415"/>
        <end position="426"/>
    </location>
</feature>
<feature type="helix" evidence="12">
    <location>
        <begin position="434"/>
        <end position="453"/>
    </location>
</feature>
<feature type="helix" evidence="12">
    <location>
        <begin position="455"/>
        <end position="458"/>
    </location>
</feature>